<gene>
    <name evidence="1 2" type="primary">cysH</name>
    <name evidence="5" type="ordered locus">Alvin_2447</name>
</gene>
<keyword id="KW-0963">Cytoplasm</keyword>
<keyword id="KW-0408">Iron</keyword>
<keyword id="KW-0411">Iron-sulfur</keyword>
<keyword id="KW-0479">Metal-binding</keyword>
<keyword id="KW-0560">Oxidoreductase</keyword>
<keyword id="KW-1185">Reference proteome</keyword>
<name>CYSH_ALLVD</name>
<comment type="function">
    <text evidence="1">Catalyzes the formation of sulfite from adenosine 5'-phosphosulfate (APS) using thioredoxin as an electron donor.</text>
</comment>
<comment type="catalytic activity">
    <reaction evidence="1">
        <text>[thioredoxin]-disulfide + sulfite + AMP + 2 H(+) = adenosine 5'-phosphosulfate + [thioredoxin]-dithiol</text>
        <dbReference type="Rhea" id="RHEA:21976"/>
        <dbReference type="Rhea" id="RHEA-COMP:10698"/>
        <dbReference type="Rhea" id="RHEA-COMP:10700"/>
        <dbReference type="ChEBI" id="CHEBI:15378"/>
        <dbReference type="ChEBI" id="CHEBI:17359"/>
        <dbReference type="ChEBI" id="CHEBI:29950"/>
        <dbReference type="ChEBI" id="CHEBI:50058"/>
        <dbReference type="ChEBI" id="CHEBI:58243"/>
        <dbReference type="ChEBI" id="CHEBI:456215"/>
        <dbReference type="EC" id="1.8.4.10"/>
    </reaction>
</comment>
<comment type="cofactor">
    <cofactor evidence="1">
        <name>[4Fe-4S] cluster</name>
        <dbReference type="ChEBI" id="CHEBI:49883"/>
    </cofactor>
    <text evidence="1">Binds 1 [4Fe-4S] cluster per subunit.</text>
</comment>
<comment type="pathway">
    <text evidence="1 4">Sulfur metabolism; hydrogen sulfide biosynthesis; sulfite from sulfate.</text>
</comment>
<comment type="subcellular location">
    <subcellularLocation>
        <location evidence="1">Cytoplasm</location>
    </subcellularLocation>
</comment>
<comment type="similarity">
    <text evidence="1 3">Belongs to the PAPS reductase family. CysH subfamily.</text>
</comment>
<reference key="1">
    <citation type="journal article" date="2000" name="Mol. Biol. Rep.">
        <title>Characterization of the cys gene locus from Allochromatium vinosum indicates an unusual sulfate assimilation pathway.</title>
        <authorList>
            <person name="Neumann S."/>
            <person name="Wynen A."/>
            <person name="Truper H.G."/>
            <person name="Dahl C."/>
        </authorList>
    </citation>
    <scope>NUCLEOTIDE SEQUENCE [GENOMIC DNA]</scope>
    <scope>PATHWAY</scope>
    <source>
        <strain>ATCC 17899 / DSM 180 / NBRC 103801 / NCIMB 10441 / D</strain>
    </source>
</reference>
<reference key="2">
    <citation type="journal article" date="2011" name="Stand. Genomic Sci.">
        <title>Complete genome sequence of Allochromatium vinosum DSM 180(T).</title>
        <authorList>
            <person name="Weissgerber T."/>
            <person name="Zigann R."/>
            <person name="Bruce D."/>
            <person name="Chang Y.J."/>
            <person name="Detter J.C."/>
            <person name="Han C."/>
            <person name="Hauser L."/>
            <person name="Jeffries C.D."/>
            <person name="Land M."/>
            <person name="Munk A.C."/>
            <person name="Tapia R."/>
            <person name="Dahl C."/>
        </authorList>
    </citation>
    <scope>NUCLEOTIDE SEQUENCE [LARGE SCALE GENOMIC DNA]</scope>
    <source>
        <strain>ATCC 17899 / DSM 180 / NBRC 103801 / NCIMB 10441 / D</strain>
    </source>
</reference>
<accession>D3RNJ4</accession>
<accession>Q9L9V0</accession>
<feature type="chain" id="PRO_0000452767" description="Adenosine 5'-phosphosulfate reductase">
    <location>
        <begin position="1"/>
        <end position="256"/>
    </location>
</feature>
<feature type="active site" description="Nucleophile; cysteine thiosulfonate intermediate" evidence="1">
    <location>
        <position position="231"/>
    </location>
</feature>
<feature type="binding site" evidence="1">
    <location>
        <position position="120"/>
    </location>
    <ligand>
        <name>[4Fe-4S] cluster</name>
        <dbReference type="ChEBI" id="CHEBI:49883"/>
    </ligand>
</feature>
<feature type="binding site" evidence="1">
    <location>
        <position position="121"/>
    </location>
    <ligand>
        <name>[4Fe-4S] cluster</name>
        <dbReference type="ChEBI" id="CHEBI:49883"/>
    </ligand>
</feature>
<feature type="binding site" evidence="1">
    <location>
        <position position="203"/>
    </location>
    <ligand>
        <name>[4Fe-4S] cluster</name>
        <dbReference type="ChEBI" id="CHEBI:49883"/>
    </ligand>
</feature>
<feature type="binding site" evidence="1">
    <location>
        <position position="206"/>
    </location>
    <ligand>
        <name>[4Fe-4S] cluster</name>
        <dbReference type="ChEBI" id="CHEBI:49883"/>
    </ligand>
</feature>
<proteinExistence type="inferred from homology"/>
<organism>
    <name type="scientific">Allochromatium vinosum (strain ATCC 17899 / DSM 180 / NBRC 103801 / NCIMB 10441 / D)</name>
    <name type="common">Chromatium vinosum</name>
    <dbReference type="NCBI Taxonomy" id="572477"/>
    <lineage>
        <taxon>Bacteria</taxon>
        <taxon>Pseudomonadati</taxon>
        <taxon>Pseudomonadota</taxon>
        <taxon>Gammaproteobacteria</taxon>
        <taxon>Chromatiales</taxon>
        <taxon>Chromatiaceae</taxon>
        <taxon>Allochromatium</taxon>
    </lineage>
</organism>
<sequence length="256" mass="29144">MTERRQPSLSTDTLPTREAAAIELLSQVCRELDSIVFATSLGAEDMVLTEIIRRERLPIRIFTLDTGRLPTETLELIEVVERHYGTRIERYAPHPDAIADYVSRYGLDGFYDSVPARQACCRVRKLEPLKRALAGQSAWVTGLRAEQSVTRAELPAREWDAANGLEKINPLADWSEHEVWAFIRHHRVPYNPLHNQGYPSIGCAPCTRAITVGEDVRAGRWWWENPETKECGLHRREFAPRQPSAHPAIERDRSAA</sequence>
<evidence type="ECO:0000255" key="1">
    <source>
        <dbReference type="HAMAP-Rule" id="MF_00063"/>
    </source>
</evidence>
<evidence type="ECO:0000303" key="2">
    <source>
    </source>
</evidence>
<evidence type="ECO:0000305" key="3"/>
<evidence type="ECO:0000305" key="4">
    <source>
    </source>
</evidence>
<evidence type="ECO:0000312" key="5">
    <source>
        <dbReference type="EMBL" id="ADC63359.1"/>
    </source>
</evidence>
<dbReference type="EC" id="1.8.4.10" evidence="1"/>
<dbReference type="EMBL" id="AF163765">
    <property type="protein sequence ID" value="AAF27544.1"/>
    <property type="molecule type" value="Genomic_DNA"/>
</dbReference>
<dbReference type="EMBL" id="CP001896">
    <property type="protein sequence ID" value="ADC63359.1"/>
    <property type="molecule type" value="Genomic_DNA"/>
</dbReference>
<dbReference type="RefSeq" id="WP_012971629.1">
    <property type="nucleotide sequence ID" value="NC_013851.1"/>
</dbReference>
<dbReference type="SMR" id="D3RNJ4"/>
<dbReference type="STRING" id="572477.Alvin_2447"/>
<dbReference type="KEGG" id="alv:Alvin_2447"/>
<dbReference type="eggNOG" id="COG0175">
    <property type="taxonomic scope" value="Bacteria"/>
</dbReference>
<dbReference type="HOGENOM" id="CLU_044089_1_0_6"/>
<dbReference type="OrthoDB" id="9794018at2"/>
<dbReference type="BioCyc" id="MetaCyc:MONOMER-18530"/>
<dbReference type="BRENDA" id="1.8.4.10">
    <property type="organism ID" value="257"/>
</dbReference>
<dbReference type="Proteomes" id="UP000001441">
    <property type="component" value="Chromosome"/>
</dbReference>
<dbReference type="GO" id="GO:0005737">
    <property type="term" value="C:cytoplasm"/>
    <property type="evidence" value="ECO:0007669"/>
    <property type="project" value="UniProtKB-SubCell"/>
</dbReference>
<dbReference type="GO" id="GO:0051539">
    <property type="term" value="F:4 iron, 4 sulfur cluster binding"/>
    <property type="evidence" value="ECO:0007669"/>
    <property type="project" value="UniProtKB-UniRule"/>
</dbReference>
<dbReference type="GO" id="GO:0043866">
    <property type="term" value="F:adenylyl-sulfate reductase (thioredoxin) activity"/>
    <property type="evidence" value="ECO:0007669"/>
    <property type="project" value="UniProtKB-EC"/>
</dbReference>
<dbReference type="GO" id="GO:0046872">
    <property type="term" value="F:metal ion binding"/>
    <property type="evidence" value="ECO:0007669"/>
    <property type="project" value="UniProtKB-KW"/>
</dbReference>
<dbReference type="GO" id="GO:0004604">
    <property type="term" value="F:phosphoadenylyl-sulfate reductase (thioredoxin) activity"/>
    <property type="evidence" value="ECO:0007669"/>
    <property type="project" value="UniProtKB-UniRule"/>
</dbReference>
<dbReference type="GO" id="GO:0019344">
    <property type="term" value="P:cysteine biosynthetic process"/>
    <property type="evidence" value="ECO:0007669"/>
    <property type="project" value="InterPro"/>
</dbReference>
<dbReference type="GO" id="GO:0070814">
    <property type="term" value="P:hydrogen sulfide biosynthetic process"/>
    <property type="evidence" value="ECO:0007669"/>
    <property type="project" value="UniProtKB-UniRule"/>
</dbReference>
<dbReference type="GO" id="GO:0019379">
    <property type="term" value="P:sulfate assimilation, phosphoadenylyl sulfate reduction by phosphoadenylyl-sulfate reductase (thioredoxin)"/>
    <property type="evidence" value="ECO:0007669"/>
    <property type="project" value="UniProtKB-UniRule"/>
</dbReference>
<dbReference type="CDD" id="cd23945">
    <property type="entry name" value="PAPS_reductase"/>
    <property type="match status" value="1"/>
</dbReference>
<dbReference type="Gene3D" id="3.40.50.620">
    <property type="entry name" value="HUPs"/>
    <property type="match status" value="1"/>
</dbReference>
<dbReference type="HAMAP" id="MF_00063">
    <property type="entry name" value="CysH"/>
    <property type="match status" value="1"/>
</dbReference>
<dbReference type="InterPro" id="IPR011798">
    <property type="entry name" value="APS_reductase"/>
</dbReference>
<dbReference type="InterPro" id="IPR004511">
    <property type="entry name" value="PAPS/APS_Rdtase"/>
</dbReference>
<dbReference type="InterPro" id="IPR002500">
    <property type="entry name" value="PAPS_reduct_dom"/>
</dbReference>
<dbReference type="InterPro" id="IPR014729">
    <property type="entry name" value="Rossmann-like_a/b/a_fold"/>
</dbReference>
<dbReference type="NCBIfam" id="TIGR02055">
    <property type="entry name" value="APS_reductase"/>
    <property type="match status" value="1"/>
</dbReference>
<dbReference type="NCBIfam" id="TIGR00434">
    <property type="entry name" value="cysH"/>
    <property type="match status" value="1"/>
</dbReference>
<dbReference type="NCBIfam" id="NF002537">
    <property type="entry name" value="PRK02090.1"/>
    <property type="match status" value="1"/>
</dbReference>
<dbReference type="PANTHER" id="PTHR46482:SF9">
    <property type="entry name" value="5'-ADENYLYLSULFATE REDUCTASE 1, CHLOROPLASTIC"/>
    <property type="match status" value="1"/>
</dbReference>
<dbReference type="PANTHER" id="PTHR46482">
    <property type="entry name" value="5'-ADENYLYLSULFATE REDUCTASE 3, CHLOROPLASTIC"/>
    <property type="match status" value="1"/>
</dbReference>
<dbReference type="Pfam" id="PF01507">
    <property type="entry name" value="PAPS_reduct"/>
    <property type="match status" value="1"/>
</dbReference>
<dbReference type="PIRSF" id="PIRSF000857">
    <property type="entry name" value="PAPS_reductase"/>
    <property type="match status" value="1"/>
</dbReference>
<dbReference type="SUPFAM" id="SSF52402">
    <property type="entry name" value="Adenine nucleotide alpha hydrolases-like"/>
    <property type="match status" value="1"/>
</dbReference>
<protein>
    <recommendedName>
        <fullName evidence="1">Adenosine 5'-phosphosulfate reductase</fullName>
        <shortName evidence="1 2">APS reductase</shortName>
        <ecNumber evidence="1">1.8.4.10</ecNumber>
    </recommendedName>
    <alternativeName>
        <fullName evidence="1 3">5'-adenylylsulfate reductase</fullName>
    </alternativeName>
    <alternativeName>
        <fullName evidence="1 3">Thioredoxin-dependent 5'-adenylylsulfate reductase</fullName>
    </alternativeName>
</protein>